<dbReference type="EC" id="2.4.1.21" evidence="1"/>
<dbReference type="EMBL" id="FM954972">
    <property type="protein sequence ID" value="CAV18193.1"/>
    <property type="molecule type" value="Genomic_DNA"/>
</dbReference>
<dbReference type="SMR" id="B7VM42"/>
<dbReference type="STRING" id="575788.VS_1083"/>
<dbReference type="CAZy" id="GT5">
    <property type="family name" value="Glycosyltransferase Family 5"/>
</dbReference>
<dbReference type="KEGG" id="vsp:VS_1083"/>
<dbReference type="PATRIC" id="fig|575788.5.peg.2407"/>
<dbReference type="eggNOG" id="COG0297">
    <property type="taxonomic scope" value="Bacteria"/>
</dbReference>
<dbReference type="HOGENOM" id="CLU_009583_18_2_6"/>
<dbReference type="UniPathway" id="UPA00164"/>
<dbReference type="Proteomes" id="UP000009100">
    <property type="component" value="Chromosome 1"/>
</dbReference>
<dbReference type="GO" id="GO:0005829">
    <property type="term" value="C:cytosol"/>
    <property type="evidence" value="ECO:0007669"/>
    <property type="project" value="TreeGrafter"/>
</dbReference>
<dbReference type="GO" id="GO:0009011">
    <property type="term" value="F:alpha-1,4-glucan glucosyltransferase (ADP-glucose donor) activity"/>
    <property type="evidence" value="ECO:0007669"/>
    <property type="project" value="UniProtKB-UniRule"/>
</dbReference>
<dbReference type="GO" id="GO:0004373">
    <property type="term" value="F:alpha-1,4-glucan glucosyltransferase (UDP-glucose donor) activity"/>
    <property type="evidence" value="ECO:0007669"/>
    <property type="project" value="InterPro"/>
</dbReference>
<dbReference type="GO" id="GO:0005978">
    <property type="term" value="P:glycogen biosynthetic process"/>
    <property type="evidence" value="ECO:0007669"/>
    <property type="project" value="UniProtKB-UniRule"/>
</dbReference>
<dbReference type="CDD" id="cd03791">
    <property type="entry name" value="GT5_Glycogen_synthase_DULL1-like"/>
    <property type="match status" value="1"/>
</dbReference>
<dbReference type="Gene3D" id="3.40.50.2000">
    <property type="entry name" value="Glycogen Phosphorylase B"/>
    <property type="match status" value="2"/>
</dbReference>
<dbReference type="HAMAP" id="MF_00484">
    <property type="entry name" value="Glycogen_synth"/>
    <property type="match status" value="1"/>
</dbReference>
<dbReference type="InterPro" id="IPR001296">
    <property type="entry name" value="Glyco_trans_1"/>
</dbReference>
<dbReference type="InterPro" id="IPR011835">
    <property type="entry name" value="GS/SS"/>
</dbReference>
<dbReference type="InterPro" id="IPR013534">
    <property type="entry name" value="Starch_synth_cat_dom"/>
</dbReference>
<dbReference type="NCBIfam" id="TIGR02095">
    <property type="entry name" value="glgA"/>
    <property type="match status" value="1"/>
</dbReference>
<dbReference type="NCBIfam" id="NF001903">
    <property type="entry name" value="PRK00654.2-2"/>
    <property type="match status" value="1"/>
</dbReference>
<dbReference type="NCBIfam" id="NF001906">
    <property type="entry name" value="PRK00654.2-5"/>
    <property type="match status" value="1"/>
</dbReference>
<dbReference type="PANTHER" id="PTHR45825:SF11">
    <property type="entry name" value="ALPHA AMYLASE DOMAIN-CONTAINING PROTEIN"/>
    <property type="match status" value="1"/>
</dbReference>
<dbReference type="PANTHER" id="PTHR45825">
    <property type="entry name" value="GRANULE-BOUND STARCH SYNTHASE 1, CHLOROPLASTIC/AMYLOPLASTIC"/>
    <property type="match status" value="1"/>
</dbReference>
<dbReference type="Pfam" id="PF08323">
    <property type="entry name" value="Glyco_transf_5"/>
    <property type="match status" value="1"/>
</dbReference>
<dbReference type="Pfam" id="PF00534">
    <property type="entry name" value="Glycos_transf_1"/>
    <property type="match status" value="1"/>
</dbReference>
<dbReference type="SUPFAM" id="SSF53756">
    <property type="entry name" value="UDP-Glycosyltransferase/glycogen phosphorylase"/>
    <property type="match status" value="1"/>
</dbReference>
<gene>
    <name evidence="1" type="primary">glgA</name>
    <name type="ordered locus">VS_1083</name>
</gene>
<accession>B7VM42</accession>
<protein>
    <recommendedName>
        <fullName evidence="1">Glycogen synthase</fullName>
        <ecNumber evidence="1">2.4.1.21</ecNumber>
    </recommendedName>
    <alternativeName>
        <fullName evidence="1">Starch [bacterial glycogen] synthase</fullName>
    </alternativeName>
</protein>
<organism>
    <name type="scientific">Vibrio atlanticus (strain LGP32)</name>
    <name type="common">Vibrio splendidus (strain Mel32)</name>
    <dbReference type="NCBI Taxonomy" id="575788"/>
    <lineage>
        <taxon>Bacteria</taxon>
        <taxon>Pseudomonadati</taxon>
        <taxon>Pseudomonadota</taxon>
        <taxon>Gammaproteobacteria</taxon>
        <taxon>Vibrionales</taxon>
        <taxon>Vibrionaceae</taxon>
        <taxon>Vibrio</taxon>
    </lineage>
</organism>
<reference key="1">
    <citation type="submission" date="2009-02" db="EMBL/GenBank/DDBJ databases">
        <title>Vibrio splendidus str. LGP32 complete genome.</title>
        <authorList>
            <person name="Mazel D."/>
            <person name="Le Roux F."/>
        </authorList>
    </citation>
    <scope>NUCLEOTIDE SEQUENCE [LARGE SCALE GENOMIC DNA]</scope>
    <source>
        <strain>LGP32</strain>
    </source>
</reference>
<sequence>MVTKTLSVLFVASEVEGLIKSGGLADVAKALPKALQTLEQDVRVTIPAYRNIPNIDSAEVILSTELDHWPHTAYQVKKLSVEGVQIFAIECAKYFDRPEMYAENNQAYADNGERFSFFSTACLDMLPKLAFQPDIIHANDWHTGFVPFLLKSRYQQHDFFENTRSVISIHNAVFKGVFAYDELQCLSEMHSYNVPEASVSDTHVTMLKAGVMCADKINAVSPTYAEELKTELGSHGMAAEFQHRSADLFGILNGCDYGAWNPETDAFLPRKFKATKHSMTRGKSACKQKLQQDVGLPVTDCAVYGMVCRLTNQKGVHYLLPIIEQFLKNELQIVIVGTGDPVLASQLKELSALHSDKFSFVEAYNNELAHLVEAGSDFFLMPSEFEPCGLNQIYSMAYGTLPIVRSVGGLKDSVNDYDQEPEIATGFAFEEPTPQALLAVLHRSLLLYAQNPSEIKRVQLYAMQQDFSWEDAAEEYLAMYHSAF</sequence>
<name>GLGA_VIBA3</name>
<comment type="function">
    <text evidence="1">Synthesizes alpha-1,4-glucan chains using ADP-glucose.</text>
</comment>
<comment type="catalytic activity">
    <reaction evidence="1">
        <text>[(1-&gt;4)-alpha-D-glucosyl](n) + ADP-alpha-D-glucose = [(1-&gt;4)-alpha-D-glucosyl](n+1) + ADP + H(+)</text>
        <dbReference type="Rhea" id="RHEA:18189"/>
        <dbReference type="Rhea" id="RHEA-COMP:9584"/>
        <dbReference type="Rhea" id="RHEA-COMP:9587"/>
        <dbReference type="ChEBI" id="CHEBI:15378"/>
        <dbReference type="ChEBI" id="CHEBI:15444"/>
        <dbReference type="ChEBI" id="CHEBI:57498"/>
        <dbReference type="ChEBI" id="CHEBI:456216"/>
        <dbReference type="EC" id="2.4.1.21"/>
    </reaction>
</comment>
<comment type="pathway">
    <text evidence="1">Glycan biosynthesis; glycogen biosynthesis.</text>
</comment>
<comment type="similarity">
    <text evidence="1">Belongs to the glycosyltransferase 1 family. Bacterial/plant glycogen synthase subfamily.</text>
</comment>
<keyword id="KW-0320">Glycogen biosynthesis</keyword>
<keyword id="KW-0328">Glycosyltransferase</keyword>
<keyword id="KW-0808">Transferase</keyword>
<evidence type="ECO:0000255" key="1">
    <source>
        <dbReference type="HAMAP-Rule" id="MF_00484"/>
    </source>
</evidence>
<feature type="chain" id="PRO_1000190092" description="Glycogen synthase">
    <location>
        <begin position="1"/>
        <end position="484"/>
    </location>
</feature>
<feature type="binding site" evidence="1">
    <location>
        <position position="20"/>
    </location>
    <ligand>
        <name>ADP-alpha-D-glucose</name>
        <dbReference type="ChEBI" id="CHEBI:57498"/>
    </ligand>
</feature>
<proteinExistence type="inferred from homology"/>